<reference key="1">
    <citation type="submission" date="2009-02" db="EMBL/GenBank/DDBJ databases">
        <title>Genome sequence of Bacillus cereus 03BB102.</title>
        <authorList>
            <person name="Dodson R.J."/>
            <person name="Jackson P."/>
            <person name="Munk A.C."/>
            <person name="Brettin T."/>
            <person name="Bruce D."/>
            <person name="Detter C."/>
            <person name="Tapia R."/>
            <person name="Han C."/>
            <person name="Sutton G."/>
            <person name="Sims D."/>
        </authorList>
    </citation>
    <scope>NUCLEOTIDE SEQUENCE [LARGE SCALE GENOMIC DNA]</scope>
    <source>
        <strain>03BB102</strain>
    </source>
</reference>
<comment type="function">
    <text evidence="1">One of the primary rRNA binding proteins, it binds directly to 16S rRNA where it nucleates assembly of the head domain of the 30S subunit. Is located at the subunit interface close to the decoding center, probably blocks exit of the E-site tRNA.</text>
</comment>
<comment type="subunit">
    <text evidence="1">Part of the 30S ribosomal subunit. Contacts proteins S9 and S11.</text>
</comment>
<comment type="similarity">
    <text evidence="1">Belongs to the universal ribosomal protein uS7 family.</text>
</comment>
<feature type="chain" id="PRO_1000135579" description="Small ribosomal subunit protein uS7">
    <location>
        <begin position="1"/>
        <end position="156"/>
    </location>
</feature>
<name>RS7_BACC3</name>
<dbReference type="EMBL" id="CP001407">
    <property type="protein sequence ID" value="ACO30552.1"/>
    <property type="molecule type" value="Genomic_DNA"/>
</dbReference>
<dbReference type="RefSeq" id="WP_001137493.1">
    <property type="nucleotide sequence ID" value="NZ_CP009318.1"/>
</dbReference>
<dbReference type="SMR" id="C1ET35"/>
<dbReference type="GeneID" id="93010947"/>
<dbReference type="KEGG" id="bcx:BCA_0135"/>
<dbReference type="PATRIC" id="fig|572264.18.peg.170"/>
<dbReference type="Proteomes" id="UP000002210">
    <property type="component" value="Chromosome"/>
</dbReference>
<dbReference type="GO" id="GO:0015935">
    <property type="term" value="C:small ribosomal subunit"/>
    <property type="evidence" value="ECO:0007669"/>
    <property type="project" value="InterPro"/>
</dbReference>
<dbReference type="GO" id="GO:0019843">
    <property type="term" value="F:rRNA binding"/>
    <property type="evidence" value="ECO:0007669"/>
    <property type="project" value="UniProtKB-UniRule"/>
</dbReference>
<dbReference type="GO" id="GO:0003735">
    <property type="term" value="F:structural constituent of ribosome"/>
    <property type="evidence" value="ECO:0007669"/>
    <property type="project" value="InterPro"/>
</dbReference>
<dbReference type="GO" id="GO:0000049">
    <property type="term" value="F:tRNA binding"/>
    <property type="evidence" value="ECO:0007669"/>
    <property type="project" value="UniProtKB-UniRule"/>
</dbReference>
<dbReference type="GO" id="GO:0006412">
    <property type="term" value="P:translation"/>
    <property type="evidence" value="ECO:0007669"/>
    <property type="project" value="UniProtKB-UniRule"/>
</dbReference>
<dbReference type="CDD" id="cd14869">
    <property type="entry name" value="uS7_Bacteria"/>
    <property type="match status" value="1"/>
</dbReference>
<dbReference type="FunFam" id="1.10.455.10:FF:000001">
    <property type="entry name" value="30S ribosomal protein S7"/>
    <property type="match status" value="1"/>
</dbReference>
<dbReference type="Gene3D" id="1.10.455.10">
    <property type="entry name" value="Ribosomal protein S7 domain"/>
    <property type="match status" value="1"/>
</dbReference>
<dbReference type="HAMAP" id="MF_00480_B">
    <property type="entry name" value="Ribosomal_uS7_B"/>
    <property type="match status" value="1"/>
</dbReference>
<dbReference type="InterPro" id="IPR000235">
    <property type="entry name" value="Ribosomal_uS7"/>
</dbReference>
<dbReference type="InterPro" id="IPR005717">
    <property type="entry name" value="Ribosomal_uS7_bac/org-type"/>
</dbReference>
<dbReference type="InterPro" id="IPR020606">
    <property type="entry name" value="Ribosomal_uS7_CS"/>
</dbReference>
<dbReference type="InterPro" id="IPR023798">
    <property type="entry name" value="Ribosomal_uS7_dom"/>
</dbReference>
<dbReference type="InterPro" id="IPR036823">
    <property type="entry name" value="Ribosomal_uS7_dom_sf"/>
</dbReference>
<dbReference type="NCBIfam" id="TIGR01029">
    <property type="entry name" value="rpsG_bact"/>
    <property type="match status" value="1"/>
</dbReference>
<dbReference type="PANTHER" id="PTHR11205">
    <property type="entry name" value="RIBOSOMAL PROTEIN S7"/>
    <property type="match status" value="1"/>
</dbReference>
<dbReference type="Pfam" id="PF00177">
    <property type="entry name" value="Ribosomal_S7"/>
    <property type="match status" value="1"/>
</dbReference>
<dbReference type="PIRSF" id="PIRSF002122">
    <property type="entry name" value="RPS7p_RPS7a_RPS5e_RPS7o"/>
    <property type="match status" value="1"/>
</dbReference>
<dbReference type="SUPFAM" id="SSF47973">
    <property type="entry name" value="Ribosomal protein S7"/>
    <property type="match status" value="1"/>
</dbReference>
<dbReference type="PROSITE" id="PS00052">
    <property type="entry name" value="RIBOSOMAL_S7"/>
    <property type="match status" value="1"/>
</dbReference>
<sequence>MPRKGPVAKRDVLPDPMYNSKLVTRLINKMMVDGKKGKSQTILYNAFDIVSERTGKEPMEVFEQALKNIMPVLEVRARRVGGANYQVPVEVRPERRTTLGLRWLVNYARLRGEKTMEERLANEILDAANNAGASVKKREDTHKMAEANKAFAHYRW</sequence>
<protein>
    <recommendedName>
        <fullName evidence="1">Small ribosomal subunit protein uS7</fullName>
    </recommendedName>
    <alternativeName>
        <fullName evidence="2">30S ribosomal protein S7</fullName>
    </alternativeName>
</protein>
<keyword id="KW-0687">Ribonucleoprotein</keyword>
<keyword id="KW-0689">Ribosomal protein</keyword>
<keyword id="KW-0694">RNA-binding</keyword>
<keyword id="KW-0699">rRNA-binding</keyword>
<keyword id="KW-0820">tRNA-binding</keyword>
<gene>
    <name evidence="1" type="primary">rpsG</name>
    <name type="ordered locus">BCA_0135</name>
</gene>
<evidence type="ECO:0000255" key="1">
    <source>
        <dbReference type="HAMAP-Rule" id="MF_00480"/>
    </source>
</evidence>
<evidence type="ECO:0000305" key="2"/>
<accession>C1ET35</accession>
<organism>
    <name type="scientific">Bacillus cereus (strain 03BB102)</name>
    <dbReference type="NCBI Taxonomy" id="572264"/>
    <lineage>
        <taxon>Bacteria</taxon>
        <taxon>Bacillati</taxon>
        <taxon>Bacillota</taxon>
        <taxon>Bacilli</taxon>
        <taxon>Bacillales</taxon>
        <taxon>Bacillaceae</taxon>
        <taxon>Bacillus</taxon>
        <taxon>Bacillus cereus group</taxon>
    </lineage>
</organism>
<proteinExistence type="inferred from homology"/>